<accession>Q60AA3</accession>
<organism>
    <name type="scientific">Methylococcus capsulatus (strain ATCC 33009 / NCIMB 11132 / Bath)</name>
    <dbReference type="NCBI Taxonomy" id="243233"/>
    <lineage>
        <taxon>Bacteria</taxon>
        <taxon>Pseudomonadati</taxon>
        <taxon>Pseudomonadota</taxon>
        <taxon>Gammaproteobacteria</taxon>
        <taxon>Methylococcales</taxon>
        <taxon>Methylococcaceae</taxon>
        <taxon>Methylococcus</taxon>
    </lineage>
</organism>
<reference key="1">
    <citation type="journal article" date="2004" name="PLoS Biol.">
        <title>Genomic insights into methanotrophy: the complete genome sequence of Methylococcus capsulatus (Bath).</title>
        <authorList>
            <person name="Ward N.L."/>
            <person name="Larsen O."/>
            <person name="Sakwa J."/>
            <person name="Bruseth L."/>
            <person name="Khouri H.M."/>
            <person name="Durkin A.S."/>
            <person name="Dimitrov G."/>
            <person name="Jiang L."/>
            <person name="Scanlan D."/>
            <person name="Kang K.H."/>
            <person name="Lewis M.R."/>
            <person name="Nelson K.E."/>
            <person name="Methe B.A."/>
            <person name="Wu M."/>
            <person name="Heidelberg J.F."/>
            <person name="Paulsen I.T."/>
            <person name="Fouts D.E."/>
            <person name="Ravel J."/>
            <person name="Tettelin H."/>
            <person name="Ren Q."/>
            <person name="Read T.D."/>
            <person name="DeBoy R.T."/>
            <person name="Seshadri R."/>
            <person name="Salzberg S.L."/>
            <person name="Jensen H.B."/>
            <person name="Birkeland N.K."/>
            <person name="Nelson W.C."/>
            <person name="Dodson R.J."/>
            <person name="Grindhaug S.H."/>
            <person name="Holt I.E."/>
            <person name="Eidhammer I."/>
            <person name="Jonasen I."/>
            <person name="Vanaken S."/>
            <person name="Utterback T.R."/>
            <person name="Feldblyum T.V."/>
            <person name="Fraser C.M."/>
            <person name="Lillehaug J.R."/>
            <person name="Eisen J.A."/>
        </authorList>
    </citation>
    <scope>NUCLEOTIDE SEQUENCE [LARGE SCALE GENOMIC DNA]</scope>
    <source>
        <strain>ATCC 33009 / NCIMB 11132 / Bath</strain>
    </source>
</reference>
<proteinExistence type="inferred from homology"/>
<comment type="function">
    <text evidence="1">Involved in lipopolysaccharide (LPS) biosynthesis. Translocates lipid A-core from the inner to the outer leaflet of the inner membrane. Transmembrane domains (TMD) form a pore in the inner membrane and the ATP-binding domain (NBD) is responsible for energy generation.</text>
</comment>
<comment type="catalytic activity">
    <reaction evidence="1">
        <text>ATP + H2O + lipid A-core oligosaccharideSide 1 = ADP + phosphate + lipid A-core oligosaccharideSide 2.</text>
        <dbReference type="EC" id="7.5.2.6"/>
    </reaction>
</comment>
<comment type="subunit">
    <text evidence="1">Homodimer.</text>
</comment>
<comment type="subcellular location">
    <subcellularLocation>
        <location evidence="1">Cell inner membrane</location>
        <topology evidence="1">Multi-pass membrane protein</topology>
    </subcellularLocation>
</comment>
<comment type="domain">
    <text evidence="1">In MsbA the ATP-binding domain (NBD) and the transmembrane domain (TMD) are fused.</text>
</comment>
<comment type="similarity">
    <text evidence="1">Belongs to the ABC transporter superfamily. Lipid exporter (TC 3.A.1.106) family.</text>
</comment>
<feature type="chain" id="PRO_0000092588" description="ATP-dependent lipid A-core flippase">
    <location>
        <begin position="1"/>
        <end position="601"/>
    </location>
</feature>
<feature type="transmembrane region" description="Helical" evidence="1">
    <location>
        <begin position="33"/>
        <end position="53"/>
    </location>
</feature>
<feature type="transmembrane region" description="Helical" evidence="1">
    <location>
        <begin position="72"/>
        <end position="92"/>
    </location>
</feature>
<feature type="transmembrane region" description="Helical" evidence="1">
    <location>
        <begin position="158"/>
        <end position="178"/>
    </location>
</feature>
<feature type="transmembrane region" description="Helical" evidence="1">
    <location>
        <begin position="255"/>
        <end position="275"/>
    </location>
</feature>
<feature type="transmembrane region" description="Helical" evidence="1">
    <location>
        <begin position="283"/>
        <end position="303"/>
    </location>
</feature>
<feature type="domain" description="ABC transmembrane type-1" evidence="1">
    <location>
        <begin position="34"/>
        <end position="315"/>
    </location>
</feature>
<feature type="domain" description="ABC transporter" evidence="1">
    <location>
        <begin position="347"/>
        <end position="583"/>
    </location>
</feature>
<feature type="binding site" evidence="1">
    <location>
        <begin position="381"/>
        <end position="388"/>
    </location>
    <ligand>
        <name>ATP</name>
        <dbReference type="ChEBI" id="CHEBI:30616"/>
    </ligand>
</feature>
<gene>
    <name evidence="1" type="primary">msbA</name>
    <name type="ordered locus">MCA0964</name>
</gene>
<evidence type="ECO:0000255" key="1">
    <source>
        <dbReference type="HAMAP-Rule" id="MF_01703"/>
    </source>
</evidence>
<keyword id="KW-0067">ATP-binding</keyword>
<keyword id="KW-0997">Cell inner membrane</keyword>
<keyword id="KW-1003">Cell membrane</keyword>
<keyword id="KW-0445">Lipid transport</keyword>
<keyword id="KW-0472">Membrane</keyword>
<keyword id="KW-0547">Nucleotide-binding</keyword>
<keyword id="KW-1185">Reference proteome</keyword>
<keyword id="KW-1278">Translocase</keyword>
<keyword id="KW-0812">Transmembrane</keyword>
<keyword id="KW-1133">Transmembrane helix</keyword>
<keyword id="KW-0813">Transport</keyword>
<name>MSBA_METCA</name>
<sequence>MKHSASESKPLSSGLAIYRRLLRYGFPYWRSFCVAVVAMIAYAAITPFFAKLIQPLIDGSFIDNDPTVLRQVSLMLIGLSVLRGIAGFLSEYCSGSVGRRVIADLRRDIFDQLLNLPCSFYDNASGGQLLSKLLYNTEQVSASLQQGIITCIREGFTVIGLMALMVYQNPVLSLVFLVLGPVLGLSVRFVSKRFRRLSMRIQESMGKVSHVTQEVIDAQRIVKVFNGKDYEAAKFATENDRNQKRQMKLIATDALGGGVIHLISVAGVAGILYVVSLDSVRQTITPGSLMAFIAAMAMMLSPIRRLSQVVSVMQRGIAAGDSIFAMLDLPRERDRGRISLKRARGSIEYRHVSLVYDDRHGAAVDDVSLVIPAGKTVALVGQSGSGKTSLVRLLPRLYEATAGEILIDGHDIRELTLESLRRQIAYVGQEVTLFNDTVASNIAYGCLDRVGLDAVREAARAANALDFIETLPQGFDTLVGQQGIVLSGGQRQRIAIARALLKNAPILILDEATSALDAESERYVQQALEVLMQNRTTLVIAHRLSTIQNADQICVMRGGRIIECGTHAQLMAARGGYADLYAMQFGYSSVPEAVAVHAVRR</sequence>
<protein>
    <recommendedName>
        <fullName evidence="1">ATP-dependent lipid A-core flippase</fullName>
        <ecNumber evidence="1">7.5.2.6</ecNumber>
    </recommendedName>
    <alternativeName>
        <fullName evidence="1">Lipid A export ATP-binding/permease protein MsbA</fullName>
    </alternativeName>
</protein>
<dbReference type="EC" id="7.5.2.6" evidence="1"/>
<dbReference type="EMBL" id="AE017282">
    <property type="protein sequence ID" value="AAU92729.1"/>
    <property type="molecule type" value="Genomic_DNA"/>
</dbReference>
<dbReference type="RefSeq" id="WP_010960270.1">
    <property type="nucleotide sequence ID" value="NC_002977.6"/>
</dbReference>
<dbReference type="SMR" id="Q60AA3"/>
<dbReference type="STRING" id="243233.MCA0964"/>
<dbReference type="GeneID" id="88223262"/>
<dbReference type="KEGG" id="mca:MCA0964"/>
<dbReference type="eggNOG" id="COG1132">
    <property type="taxonomic scope" value="Bacteria"/>
</dbReference>
<dbReference type="HOGENOM" id="CLU_000604_84_3_6"/>
<dbReference type="Proteomes" id="UP000006821">
    <property type="component" value="Chromosome"/>
</dbReference>
<dbReference type="GO" id="GO:0005886">
    <property type="term" value="C:plasma membrane"/>
    <property type="evidence" value="ECO:0007669"/>
    <property type="project" value="UniProtKB-SubCell"/>
</dbReference>
<dbReference type="GO" id="GO:0015421">
    <property type="term" value="F:ABC-type oligopeptide transporter activity"/>
    <property type="evidence" value="ECO:0007669"/>
    <property type="project" value="TreeGrafter"/>
</dbReference>
<dbReference type="GO" id="GO:0005524">
    <property type="term" value="F:ATP binding"/>
    <property type="evidence" value="ECO:0007669"/>
    <property type="project" value="UniProtKB-KW"/>
</dbReference>
<dbReference type="GO" id="GO:0016887">
    <property type="term" value="F:ATP hydrolysis activity"/>
    <property type="evidence" value="ECO:0007669"/>
    <property type="project" value="InterPro"/>
</dbReference>
<dbReference type="GO" id="GO:0034040">
    <property type="term" value="F:ATPase-coupled lipid transmembrane transporter activity"/>
    <property type="evidence" value="ECO:0007669"/>
    <property type="project" value="InterPro"/>
</dbReference>
<dbReference type="CDD" id="cd18552">
    <property type="entry name" value="ABC_6TM_MsbA_like"/>
    <property type="match status" value="1"/>
</dbReference>
<dbReference type="FunFam" id="3.40.50.300:FF:000140">
    <property type="entry name" value="Lipid A export ATP-binding/permease protein MsbA"/>
    <property type="match status" value="1"/>
</dbReference>
<dbReference type="Gene3D" id="1.20.1560.10">
    <property type="entry name" value="ABC transporter type 1, transmembrane domain"/>
    <property type="match status" value="1"/>
</dbReference>
<dbReference type="Gene3D" id="3.40.50.300">
    <property type="entry name" value="P-loop containing nucleotide triphosphate hydrolases"/>
    <property type="match status" value="1"/>
</dbReference>
<dbReference type="InterPro" id="IPR003593">
    <property type="entry name" value="AAA+_ATPase"/>
</dbReference>
<dbReference type="InterPro" id="IPR011527">
    <property type="entry name" value="ABC1_TM_dom"/>
</dbReference>
<dbReference type="InterPro" id="IPR036640">
    <property type="entry name" value="ABC1_TM_sf"/>
</dbReference>
<dbReference type="InterPro" id="IPR003439">
    <property type="entry name" value="ABC_transporter-like_ATP-bd"/>
</dbReference>
<dbReference type="InterPro" id="IPR017871">
    <property type="entry name" value="ABC_transporter-like_CS"/>
</dbReference>
<dbReference type="InterPro" id="IPR011917">
    <property type="entry name" value="ABC_transpr_lipidA"/>
</dbReference>
<dbReference type="InterPro" id="IPR027417">
    <property type="entry name" value="P-loop_NTPase"/>
</dbReference>
<dbReference type="InterPro" id="IPR039421">
    <property type="entry name" value="Type_1_exporter"/>
</dbReference>
<dbReference type="NCBIfam" id="TIGR02203">
    <property type="entry name" value="MsbA_lipidA"/>
    <property type="match status" value="1"/>
</dbReference>
<dbReference type="PANTHER" id="PTHR43394:SF1">
    <property type="entry name" value="ATP-BINDING CASSETTE SUB-FAMILY B MEMBER 10, MITOCHONDRIAL"/>
    <property type="match status" value="1"/>
</dbReference>
<dbReference type="PANTHER" id="PTHR43394">
    <property type="entry name" value="ATP-DEPENDENT PERMEASE MDL1, MITOCHONDRIAL"/>
    <property type="match status" value="1"/>
</dbReference>
<dbReference type="Pfam" id="PF00664">
    <property type="entry name" value="ABC_membrane"/>
    <property type="match status" value="1"/>
</dbReference>
<dbReference type="Pfam" id="PF00005">
    <property type="entry name" value="ABC_tran"/>
    <property type="match status" value="1"/>
</dbReference>
<dbReference type="SMART" id="SM00382">
    <property type="entry name" value="AAA"/>
    <property type="match status" value="1"/>
</dbReference>
<dbReference type="SUPFAM" id="SSF90123">
    <property type="entry name" value="ABC transporter transmembrane region"/>
    <property type="match status" value="1"/>
</dbReference>
<dbReference type="SUPFAM" id="SSF52540">
    <property type="entry name" value="P-loop containing nucleoside triphosphate hydrolases"/>
    <property type="match status" value="1"/>
</dbReference>
<dbReference type="PROSITE" id="PS50929">
    <property type="entry name" value="ABC_TM1F"/>
    <property type="match status" value="1"/>
</dbReference>
<dbReference type="PROSITE" id="PS00211">
    <property type="entry name" value="ABC_TRANSPORTER_1"/>
    <property type="match status" value="1"/>
</dbReference>
<dbReference type="PROSITE" id="PS50893">
    <property type="entry name" value="ABC_TRANSPORTER_2"/>
    <property type="match status" value="1"/>
</dbReference>
<dbReference type="PROSITE" id="PS51239">
    <property type="entry name" value="MSBA"/>
    <property type="match status" value="1"/>
</dbReference>